<proteinExistence type="inferred from homology"/>
<accession>B1X677</accession>
<dbReference type="EC" id="4.4.1.15" evidence="1"/>
<dbReference type="EMBL" id="CP000948">
    <property type="protein sequence ID" value="ACB03109.1"/>
    <property type="molecule type" value="Genomic_DNA"/>
</dbReference>
<dbReference type="RefSeq" id="WP_001128215.1">
    <property type="nucleotide sequence ID" value="NC_010473.1"/>
</dbReference>
<dbReference type="SMR" id="B1X677"/>
<dbReference type="GeneID" id="75205835"/>
<dbReference type="KEGG" id="ecd:ECDH10B_2060"/>
<dbReference type="HOGENOM" id="CLU_048897_1_0_6"/>
<dbReference type="GO" id="GO:0019148">
    <property type="term" value="F:D-cysteine desulfhydrase activity"/>
    <property type="evidence" value="ECO:0007669"/>
    <property type="project" value="UniProtKB-UniRule"/>
</dbReference>
<dbReference type="GO" id="GO:0046416">
    <property type="term" value="P:D-amino acid metabolic process"/>
    <property type="evidence" value="ECO:0007669"/>
    <property type="project" value="UniProtKB-UniRule"/>
</dbReference>
<dbReference type="CDD" id="cd06449">
    <property type="entry name" value="ACCD"/>
    <property type="match status" value="1"/>
</dbReference>
<dbReference type="FunFam" id="3.40.50.1100:FF:000019">
    <property type="entry name" value="D-cysteine desulfhydrase"/>
    <property type="match status" value="1"/>
</dbReference>
<dbReference type="Gene3D" id="3.40.50.1100">
    <property type="match status" value="2"/>
</dbReference>
<dbReference type="HAMAP" id="MF_01045">
    <property type="entry name" value="D_Cys_desulfhydr"/>
    <property type="match status" value="1"/>
</dbReference>
<dbReference type="InterPro" id="IPR027278">
    <property type="entry name" value="ACCD_DCysDesulf"/>
</dbReference>
<dbReference type="InterPro" id="IPR005966">
    <property type="entry name" value="D-Cys_desShydrase"/>
</dbReference>
<dbReference type="InterPro" id="IPR023702">
    <property type="entry name" value="D_Cys_desulphydr_bac"/>
</dbReference>
<dbReference type="InterPro" id="IPR001926">
    <property type="entry name" value="TrpB-like_PALP"/>
</dbReference>
<dbReference type="InterPro" id="IPR036052">
    <property type="entry name" value="TrpB-like_PALP_sf"/>
</dbReference>
<dbReference type="NCBIfam" id="TIGR01275">
    <property type="entry name" value="ACC_deam_rel"/>
    <property type="match status" value="1"/>
</dbReference>
<dbReference type="NCBIfam" id="NF003029">
    <property type="entry name" value="PRK03910.1-1"/>
    <property type="match status" value="1"/>
</dbReference>
<dbReference type="NCBIfam" id="NF003030">
    <property type="entry name" value="PRK03910.1-3"/>
    <property type="match status" value="1"/>
</dbReference>
<dbReference type="NCBIfam" id="NF003032">
    <property type="entry name" value="PRK03910.1-5"/>
    <property type="match status" value="1"/>
</dbReference>
<dbReference type="PANTHER" id="PTHR43780">
    <property type="entry name" value="1-AMINOCYCLOPROPANE-1-CARBOXYLATE DEAMINASE-RELATED"/>
    <property type="match status" value="1"/>
</dbReference>
<dbReference type="PANTHER" id="PTHR43780:SF2">
    <property type="entry name" value="1-AMINOCYCLOPROPANE-1-CARBOXYLATE DEAMINASE-RELATED"/>
    <property type="match status" value="1"/>
</dbReference>
<dbReference type="Pfam" id="PF00291">
    <property type="entry name" value="PALP"/>
    <property type="match status" value="1"/>
</dbReference>
<dbReference type="PIRSF" id="PIRSF006278">
    <property type="entry name" value="ACCD_DCysDesulf"/>
    <property type="match status" value="1"/>
</dbReference>
<dbReference type="SUPFAM" id="SSF53686">
    <property type="entry name" value="Tryptophan synthase beta subunit-like PLP-dependent enzymes"/>
    <property type="match status" value="1"/>
</dbReference>
<keyword id="KW-0456">Lyase</keyword>
<keyword id="KW-0663">Pyridoxal phosphate</keyword>
<sequence>MPLHNLTRFPRLEFIGAPTPLEYLPRFSDYLGREIFIKRDDVTPMAMGGNKLRKLEFLAADALREGADTLITAGAIQSNHVRQTAAVAAKLGLHCVALLENPIGTTAENYLTNGNRLLLDLFNTQIEMCDALTDPNAQLEELATRVEAQGFRPYVIPVGGSNALGALGYVESALEIAQQCEGAVNISSVVVASGSAGTHAGLAVGLEHLMPESELIGVTVSRSVADQLPKVVNLQQAIAKELELTASAEILLWDDYFAPGYGVPNDEGMEAVKLLARLEGILLDPVYTGKAMAGLIDGISQKRFKDEGPILFIHTGGAPALFAYHPHV</sequence>
<evidence type="ECO:0000255" key="1">
    <source>
        <dbReference type="HAMAP-Rule" id="MF_01045"/>
    </source>
</evidence>
<name>DCYD_ECODH</name>
<comment type="function">
    <text evidence="1">Catalyzes the alpha,beta-elimination reaction of D-cysteine and of several D-cysteine derivatives. It could be a defense mechanism against D-cysteine.</text>
</comment>
<comment type="catalytic activity">
    <reaction evidence="1">
        <text>D-cysteine + H2O = hydrogen sulfide + pyruvate + NH4(+) + H(+)</text>
        <dbReference type="Rhea" id="RHEA:11268"/>
        <dbReference type="ChEBI" id="CHEBI:15361"/>
        <dbReference type="ChEBI" id="CHEBI:15377"/>
        <dbReference type="ChEBI" id="CHEBI:15378"/>
        <dbReference type="ChEBI" id="CHEBI:28938"/>
        <dbReference type="ChEBI" id="CHEBI:29919"/>
        <dbReference type="ChEBI" id="CHEBI:35236"/>
        <dbReference type="EC" id="4.4.1.15"/>
    </reaction>
</comment>
<comment type="cofactor">
    <cofactor evidence="1">
        <name>pyridoxal 5'-phosphate</name>
        <dbReference type="ChEBI" id="CHEBI:597326"/>
    </cofactor>
</comment>
<comment type="subunit">
    <text evidence="1">Homodimer.</text>
</comment>
<comment type="similarity">
    <text evidence="1">Belongs to the ACC deaminase/D-cysteine desulfhydrase family.</text>
</comment>
<reference key="1">
    <citation type="journal article" date="2008" name="J. Bacteriol.">
        <title>The complete genome sequence of Escherichia coli DH10B: insights into the biology of a laboratory workhorse.</title>
        <authorList>
            <person name="Durfee T."/>
            <person name="Nelson R."/>
            <person name="Baldwin S."/>
            <person name="Plunkett G. III"/>
            <person name="Burland V."/>
            <person name="Mau B."/>
            <person name="Petrosino J.F."/>
            <person name="Qin X."/>
            <person name="Muzny D.M."/>
            <person name="Ayele M."/>
            <person name="Gibbs R.A."/>
            <person name="Csorgo B."/>
            <person name="Posfai G."/>
            <person name="Weinstock G.M."/>
            <person name="Blattner F.R."/>
        </authorList>
    </citation>
    <scope>NUCLEOTIDE SEQUENCE [LARGE SCALE GENOMIC DNA]</scope>
    <source>
        <strain>K12 / DH10B</strain>
    </source>
</reference>
<feature type="chain" id="PRO_1000136160" description="D-cysteine desulfhydrase">
    <location>
        <begin position="1"/>
        <end position="328"/>
    </location>
</feature>
<feature type="modified residue" description="N6-(pyridoxal phosphate)lysine" evidence="1">
    <location>
        <position position="51"/>
    </location>
</feature>
<organism>
    <name type="scientific">Escherichia coli (strain K12 / DH10B)</name>
    <dbReference type="NCBI Taxonomy" id="316385"/>
    <lineage>
        <taxon>Bacteria</taxon>
        <taxon>Pseudomonadati</taxon>
        <taxon>Pseudomonadota</taxon>
        <taxon>Gammaproteobacteria</taxon>
        <taxon>Enterobacterales</taxon>
        <taxon>Enterobacteriaceae</taxon>
        <taxon>Escherichia</taxon>
    </lineage>
</organism>
<protein>
    <recommendedName>
        <fullName evidence="1">D-cysteine desulfhydrase</fullName>
        <ecNumber evidence="1">4.4.1.15</ecNumber>
    </recommendedName>
</protein>
<gene>
    <name evidence="1" type="primary">dcyD</name>
    <name type="ordered locus">ECDH10B_2060</name>
</gene>